<accession>A1SST4</accession>
<name>CMOB_PSYIN</name>
<reference key="1">
    <citation type="journal article" date="2008" name="BMC Genomics">
        <title>Genomics of an extreme psychrophile, Psychromonas ingrahamii.</title>
        <authorList>
            <person name="Riley M."/>
            <person name="Staley J.T."/>
            <person name="Danchin A."/>
            <person name="Wang T.Z."/>
            <person name="Brettin T.S."/>
            <person name="Hauser L.J."/>
            <person name="Land M.L."/>
            <person name="Thompson L.S."/>
        </authorList>
    </citation>
    <scope>NUCLEOTIDE SEQUENCE [LARGE SCALE GENOMIC DNA]</scope>
    <source>
        <strain>DSM 17664 / CCUG 51855 / 37</strain>
    </source>
</reference>
<comment type="function">
    <text evidence="1">Catalyzes carboxymethyl transfer from carboxy-S-adenosyl-L-methionine (Cx-SAM) to 5-hydroxyuridine (ho5U) to form 5-carboxymethoxyuridine (cmo5U) at position 34 in tRNAs.</text>
</comment>
<comment type="catalytic activity">
    <reaction evidence="1">
        <text>carboxy-S-adenosyl-L-methionine + 5-hydroxyuridine(34) in tRNA = 5-carboxymethoxyuridine(34) in tRNA + S-adenosyl-L-homocysteine + H(+)</text>
        <dbReference type="Rhea" id="RHEA:52848"/>
        <dbReference type="Rhea" id="RHEA-COMP:13381"/>
        <dbReference type="Rhea" id="RHEA-COMP:13383"/>
        <dbReference type="ChEBI" id="CHEBI:15378"/>
        <dbReference type="ChEBI" id="CHEBI:57856"/>
        <dbReference type="ChEBI" id="CHEBI:134278"/>
        <dbReference type="ChEBI" id="CHEBI:136877"/>
        <dbReference type="ChEBI" id="CHEBI:136879"/>
    </reaction>
</comment>
<comment type="subunit">
    <text evidence="1">Homotetramer.</text>
</comment>
<comment type="similarity">
    <text evidence="1">Belongs to the class I-like SAM-binding methyltransferase superfamily. CmoB family.</text>
</comment>
<sequence>MIDFTNFYSSIAKNRLSHWLRTLPMQLHEWENTHVHGQLASWIRVLNKFPDIKTSHIELKDRVEIGSATELSPGETKKLENLLQKFHPWRKGPFVIHGIHIDTEWRSDWKWDRLLPHISPLKYRYVLDVGCGSGYHMWRMRGEGAEFVVGIDPSELFLCQFEAVRHFANKEQNVHLLPLGIQELPKLGAFDTVFSMGVLYHRKSPMDHITQLQDQLVEGGELVLETLVIGGDENAVLVPQDRYAKMRNIWFLPSAQALKLWVEKCGFENVRIADINDTLTGEQRSTAWMTNESLEDYLDPNDPSRTVEGYPAPKRALLIAKKAIKALS</sequence>
<organism>
    <name type="scientific">Psychromonas ingrahamii (strain DSM 17664 / CCUG 51855 / 37)</name>
    <dbReference type="NCBI Taxonomy" id="357804"/>
    <lineage>
        <taxon>Bacteria</taxon>
        <taxon>Pseudomonadati</taxon>
        <taxon>Pseudomonadota</taxon>
        <taxon>Gammaproteobacteria</taxon>
        <taxon>Alteromonadales</taxon>
        <taxon>Psychromonadaceae</taxon>
        <taxon>Psychromonas</taxon>
    </lineage>
</organism>
<evidence type="ECO:0000255" key="1">
    <source>
        <dbReference type="HAMAP-Rule" id="MF_01590"/>
    </source>
</evidence>
<keyword id="KW-1185">Reference proteome</keyword>
<keyword id="KW-0808">Transferase</keyword>
<keyword id="KW-0819">tRNA processing</keyword>
<feature type="chain" id="PRO_0000313956" description="tRNA U34 carboxymethyltransferase">
    <location>
        <begin position="1"/>
        <end position="328"/>
    </location>
</feature>
<feature type="binding site" evidence="1">
    <location>
        <position position="91"/>
    </location>
    <ligand>
        <name>carboxy-S-adenosyl-L-methionine</name>
        <dbReference type="ChEBI" id="CHEBI:134278"/>
    </ligand>
</feature>
<feature type="binding site" evidence="1">
    <location>
        <position position="105"/>
    </location>
    <ligand>
        <name>carboxy-S-adenosyl-L-methionine</name>
        <dbReference type="ChEBI" id="CHEBI:134278"/>
    </ligand>
</feature>
<feature type="binding site" evidence="1">
    <location>
        <position position="110"/>
    </location>
    <ligand>
        <name>carboxy-S-adenosyl-L-methionine</name>
        <dbReference type="ChEBI" id="CHEBI:134278"/>
    </ligand>
</feature>
<feature type="binding site" evidence="1">
    <location>
        <position position="130"/>
    </location>
    <ligand>
        <name>carboxy-S-adenosyl-L-methionine</name>
        <dbReference type="ChEBI" id="CHEBI:134278"/>
    </ligand>
</feature>
<feature type="binding site" evidence="1">
    <location>
        <begin position="152"/>
        <end position="154"/>
    </location>
    <ligand>
        <name>carboxy-S-adenosyl-L-methionine</name>
        <dbReference type="ChEBI" id="CHEBI:134278"/>
    </ligand>
</feature>
<feature type="binding site" evidence="1">
    <location>
        <position position="196"/>
    </location>
    <ligand>
        <name>carboxy-S-adenosyl-L-methionine</name>
        <dbReference type="ChEBI" id="CHEBI:134278"/>
    </ligand>
</feature>
<feature type="binding site" evidence="1">
    <location>
        <position position="200"/>
    </location>
    <ligand>
        <name>carboxy-S-adenosyl-L-methionine</name>
        <dbReference type="ChEBI" id="CHEBI:134278"/>
    </ligand>
</feature>
<feature type="binding site" evidence="1">
    <location>
        <position position="315"/>
    </location>
    <ligand>
        <name>carboxy-S-adenosyl-L-methionine</name>
        <dbReference type="ChEBI" id="CHEBI:134278"/>
    </ligand>
</feature>
<proteinExistence type="inferred from homology"/>
<dbReference type="EC" id="2.5.1.-" evidence="1"/>
<dbReference type="EMBL" id="CP000510">
    <property type="protein sequence ID" value="ABM02549.1"/>
    <property type="molecule type" value="Genomic_DNA"/>
</dbReference>
<dbReference type="RefSeq" id="WP_011769108.1">
    <property type="nucleotide sequence ID" value="NC_008709.1"/>
</dbReference>
<dbReference type="SMR" id="A1SST4"/>
<dbReference type="STRING" id="357804.Ping_0697"/>
<dbReference type="KEGG" id="pin:Ping_0697"/>
<dbReference type="eggNOG" id="COG0500">
    <property type="taxonomic scope" value="Bacteria"/>
</dbReference>
<dbReference type="HOGENOM" id="CLU_052665_0_0_6"/>
<dbReference type="OrthoDB" id="9773188at2"/>
<dbReference type="Proteomes" id="UP000000639">
    <property type="component" value="Chromosome"/>
</dbReference>
<dbReference type="GO" id="GO:0008168">
    <property type="term" value="F:methyltransferase activity"/>
    <property type="evidence" value="ECO:0007669"/>
    <property type="project" value="TreeGrafter"/>
</dbReference>
<dbReference type="GO" id="GO:0016765">
    <property type="term" value="F:transferase activity, transferring alkyl or aryl (other than methyl) groups"/>
    <property type="evidence" value="ECO:0007669"/>
    <property type="project" value="UniProtKB-UniRule"/>
</dbReference>
<dbReference type="GO" id="GO:0002098">
    <property type="term" value="P:tRNA wobble uridine modification"/>
    <property type="evidence" value="ECO:0007669"/>
    <property type="project" value="InterPro"/>
</dbReference>
<dbReference type="CDD" id="cd02440">
    <property type="entry name" value="AdoMet_MTases"/>
    <property type="match status" value="1"/>
</dbReference>
<dbReference type="Gene3D" id="3.40.50.150">
    <property type="entry name" value="Vaccinia Virus protein VP39"/>
    <property type="match status" value="1"/>
</dbReference>
<dbReference type="HAMAP" id="MF_01590">
    <property type="entry name" value="tRNA_carboxymethyltr_CmoB"/>
    <property type="match status" value="1"/>
</dbReference>
<dbReference type="InterPro" id="IPR010017">
    <property type="entry name" value="CmoB"/>
</dbReference>
<dbReference type="InterPro" id="IPR027555">
    <property type="entry name" value="Mo5U34_MeTrfas-like"/>
</dbReference>
<dbReference type="InterPro" id="IPR029063">
    <property type="entry name" value="SAM-dependent_MTases_sf"/>
</dbReference>
<dbReference type="NCBIfam" id="NF011650">
    <property type="entry name" value="PRK15068.1"/>
    <property type="match status" value="1"/>
</dbReference>
<dbReference type="NCBIfam" id="TIGR00452">
    <property type="entry name" value="tRNA 5-methoxyuridine(34)/uridine 5-oxyacetic acid(34) synthase CmoB"/>
    <property type="match status" value="1"/>
</dbReference>
<dbReference type="PANTHER" id="PTHR43464">
    <property type="entry name" value="METHYLTRANSFERASE"/>
    <property type="match status" value="1"/>
</dbReference>
<dbReference type="PANTHER" id="PTHR43464:SF95">
    <property type="entry name" value="TRNA U34 CARBOXYMETHYLTRANSFERASE"/>
    <property type="match status" value="1"/>
</dbReference>
<dbReference type="Pfam" id="PF08003">
    <property type="entry name" value="Methyltransf_9"/>
    <property type="match status" value="1"/>
</dbReference>
<dbReference type="SUPFAM" id="SSF53335">
    <property type="entry name" value="S-adenosyl-L-methionine-dependent methyltransferases"/>
    <property type="match status" value="1"/>
</dbReference>
<gene>
    <name evidence="1" type="primary">cmoB</name>
    <name type="ordered locus">Ping_0697</name>
</gene>
<protein>
    <recommendedName>
        <fullName evidence="1">tRNA U34 carboxymethyltransferase</fullName>
        <ecNumber evidence="1">2.5.1.-</ecNumber>
    </recommendedName>
</protein>